<sequence length="135" mass="15065">MAGAAAFVEADNAEEIMARIETKSQKIESLLKHYKHVEALKTALDGSPPKTLDERCKSANWIVVHRAIMAIKDIEGMLNSLTAEYYDILMKYLYRGLSTGDEPTCEQCLMIHEKLTERAGLGCILRCLSDTTNTV</sequence>
<organism>
    <name type="scientific">Arabidopsis thaliana</name>
    <name type="common">Mouse-ear cress</name>
    <dbReference type="NCBI Taxonomy" id="3702"/>
    <lineage>
        <taxon>Eukaryota</taxon>
        <taxon>Viridiplantae</taxon>
        <taxon>Streptophyta</taxon>
        <taxon>Embryophyta</taxon>
        <taxon>Tracheophyta</taxon>
        <taxon>Spermatophyta</taxon>
        <taxon>Magnoliopsida</taxon>
        <taxon>eudicotyledons</taxon>
        <taxon>Gunneridae</taxon>
        <taxon>Pentapetalae</taxon>
        <taxon>rosids</taxon>
        <taxon>malvids</taxon>
        <taxon>Brassicales</taxon>
        <taxon>Brassicaceae</taxon>
        <taxon>Camelineae</taxon>
        <taxon>Arabidopsis</taxon>
    </lineage>
</organism>
<keyword id="KW-0009">Actin-binding</keyword>
<keyword id="KW-0966">Cell projection</keyword>
<keyword id="KW-0963">Cytoplasm</keyword>
<keyword id="KW-0206">Cytoskeleton</keyword>
<keyword id="KW-1185">Reference proteome</keyword>
<accession>B3H6Y2</accession>
<protein>
    <recommendedName>
        <fullName>Actin-related protein 2/3 complex subunit 5B</fullName>
    </recommendedName>
    <alternativeName>
        <fullName>Actin-related protein C5B</fullName>
    </alternativeName>
    <alternativeName>
        <fullName>Arp2/3 complex 16 kDa subunit</fullName>
        <shortName>p16-ARC</shortName>
    </alternativeName>
</protein>
<name>ARC5B_ARATH</name>
<comment type="function">
    <text evidence="1">Functions as a component of the Arp2/3 complex which is involved in regulation of actin polymerization and together with an activating nucleation-promoting factor (NPF) mediates the formation of branched actin networks. Arp2/3 complex plays a critical role in the control of cell morphogenesis via the modulation of cell polarity development.</text>
</comment>
<comment type="subunit">
    <text evidence="1">Component of the Arp2/3 complex composed of ARP2, ARP3, ARPC1/p41-ARC, ARPC2/p34-ARC, ARPC3/p21-ARC, ARPC4/p20-ARC and ARPC5/p16-ARC.</text>
</comment>
<comment type="subcellular location">
    <subcellularLocation>
        <location evidence="1">Cytoplasm</location>
        <location evidence="1">Cytoskeleton</location>
    </subcellularLocation>
    <subcellularLocation>
        <location evidence="1">Cell projection</location>
    </subcellularLocation>
</comment>
<comment type="similarity">
    <text evidence="2">Belongs to the ARPC5 family.</text>
</comment>
<proteinExistence type="inferred from homology"/>
<feature type="chain" id="PRO_0000422533" description="Actin-related protein 2/3 complex subunit 5B">
    <location>
        <begin position="1"/>
        <end position="135"/>
    </location>
</feature>
<reference key="1">
    <citation type="journal article" date="1998" name="DNA Res.">
        <title>Structural analysis of Arabidopsis thaliana chromosome 5. VI. Sequence features of the regions of 1,367,185 bp covered by 19 physically assigned P1 and TAC clones.</title>
        <authorList>
            <person name="Kotani H."/>
            <person name="Nakamura Y."/>
            <person name="Sato S."/>
            <person name="Asamizu E."/>
            <person name="Kaneko T."/>
            <person name="Miyajima N."/>
            <person name="Tabata S."/>
        </authorList>
    </citation>
    <scope>NUCLEOTIDE SEQUENCE [LARGE SCALE GENOMIC DNA]</scope>
    <source>
        <strain>cv. Columbia</strain>
    </source>
</reference>
<reference key="2">
    <citation type="journal article" date="2017" name="Plant J.">
        <title>Araport11: a complete reannotation of the Arabidopsis thaliana reference genome.</title>
        <authorList>
            <person name="Cheng C.Y."/>
            <person name="Krishnakumar V."/>
            <person name="Chan A.P."/>
            <person name="Thibaud-Nissen F."/>
            <person name="Schobel S."/>
            <person name="Town C.D."/>
        </authorList>
    </citation>
    <scope>GENOME REANNOTATION</scope>
    <source>
        <strain>cv. Columbia</strain>
    </source>
</reference>
<reference key="3">
    <citation type="journal article" date="2005" name="Curr. Opin. Plant Biol.">
        <title>Breaking the WAVE complex: the point of Arabidopsis trichomes.</title>
        <authorList>
            <person name="Szymanski D.B."/>
        </authorList>
    </citation>
    <scope>REVIEW</scope>
</reference>
<gene>
    <name type="primary">ARPC5B</name>
    <name type="ordered locus">At5g65274</name>
    <name type="ORF">MQN23</name>
</gene>
<dbReference type="EMBL" id="AB013395">
    <property type="status" value="NOT_ANNOTATED_CDS"/>
    <property type="molecule type" value="Genomic_DNA"/>
</dbReference>
<dbReference type="EMBL" id="CP002688">
    <property type="protein sequence ID" value="AED98032.1"/>
    <property type="molecule type" value="Genomic_DNA"/>
</dbReference>
<dbReference type="RefSeq" id="NP_001119503.1">
    <property type="nucleotide sequence ID" value="NM_001126031.1"/>
</dbReference>
<dbReference type="SMR" id="B3H6Y2"/>
<dbReference type="FunCoup" id="B3H6Y2">
    <property type="interactions" value="2822"/>
</dbReference>
<dbReference type="STRING" id="3702.B3H6Y2"/>
<dbReference type="PaxDb" id="3702-AT5G65274.1"/>
<dbReference type="EnsemblPlants" id="AT5G65274.1">
    <property type="protein sequence ID" value="AT5G65274.1"/>
    <property type="gene ID" value="AT5G65274"/>
</dbReference>
<dbReference type="GeneID" id="6240785"/>
<dbReference type="Gramene" id="AT5G65274.1">
    <property type="protein sequence ID" value="AT5G65274.1"/>
    <property type="gene ID" value="AT5G65274"/>
</dbReference>
<dbReference type="KEGG" id="ath:AT5G65274"/>
<dbReference type="Araport" id="AT5G65274"/>
<dbReference type="TAIR" id="AT5G65274"/>
<dbReference type="eggNOG" id="KOG3380">
    <property type="taxonomic scope" value="Eukaryota"/>
</dbReference>
<dbReference type="HOGENOM" id="CLU_101888_3_0_1"/>
<dbReference type="InParanoid" id="B3H6Y2"/>
<dbReference type="OMA" id="KHYKHVE"/>
<dbReference type="PhylomeDB" id="B3H6Y2"/>
<dbReference type="PRO" id="PR:B3H6Y2"/>
<dbReference type="Proteomes" id="UP000006548">
    <property type="component" value="Chromosome 5"/>
</dbReference>
<dbReference type="ExpressionAtlas" id="B3H6Y2">
    <property type="expression patterns" value="baseline and differential"/>
</dbReference>
<dbReference type="GO" id="GO:0005885">
    <property type="term" value="C:Arp2/3 protein complex"/>
    <property type="evidence" value="ECO:0007669"/>
    <property type="project" value="InterPro"/>
</dbReference>
<dbReference type="GO" id="GO:0042995">
    <property type="term" value="C:cell projection"/>
    <property type="evidence" value="ECO:0007669"/>
    <property type="project" value="UniProtKB-SubCell"/>
</dbReference>
<dbReference type="GO" id="GO:0005737">
    <property type="term" value="C:cytoplasm"/>
    <property type="evidence" value="ECO:0007669"/>
    <property type="project" value="UniProtKB-KW"/>
</dbReference>
<dbReference type="GO" id="GO:0003779">
    <property type="term" value="F:actin binding"/>
    <property type="evidence" value="ECO:0007669"/>
    <property type="project" value="UniProtKB-KW"/>
</dbReference>
<dbReference type="GO" id="GO:0034314">
    <property type="term" value="P:Arp2/3 complex-mediated actin nucleation"/>
    <property type="evidence" value="ECO:0007669"/>
    <property type="project" value="InterPro"/>
</dbReference>
<dbReference type="GO" id="GO:0030833">
    <property type="term" value="P:regulation of actin filament polymerization"/>
    <property type="evidence" value="ECO:0007669"/>
    <property type="project" value="InterPro"/>
</dbReference>
<dbReference type="FunFam" id="1.25.40.190:FF:000002">
    <property type="entry name" value="Actin-related protein 2/3 complex subunit 5"/>
    <property type="match status" value="1"/>
</dbReference>
<dbReference type="Gene3D" id="1.25.40.190">
    <property type="entry name" value="Actin-related protein 2/3 complex subunit 5"/>
    <property type="match status" value="1"/>
</dbReference>
<dbReference type="InterPro" id="IPR006789">
    <property type="entry name" value="ARPC5"/>
</dbReference>
<dbReference type="InterPro" id="IPR036743">
    <property type="entry name" value="ARPC5_sf"/>
</dbReference>
<dbReference type="PANTHER" id="PTHR12644">
    <property type="entry name" value="ARP2/3 COMPLEX 16 KD SUBUNIT P16-ARC"/>
    <property type="match status" value="1"/>
</dbReference>
<dbReference type="Pfam" id="PF04699">
    <property type="entry name" value="P16-Arc"/>
    <property type="match status" value="1"/>
</dbReference>
<dbReference type="SUPFAM" id="SSF69103">
    <property type="entry name" value="Arp2/3 complex 16 kDa subunit ARPC5"/>
    <property type="match status" value="1"/>
</dbReference>
<evidence type="ECO:0000250" key="1"/>
<evidence type="ECO:0000305" key="2"/>